<sequence length="351" mass="39457">MLKNDLFLRALKRQPVPRTPIWVMRQAGRYLPEYRAIREKTDFLTLCKTPELATEVTIQPVDIIGVDAAIIFSDILVVNEAMGMNVEIIESKGIRLSPPIRSQVDIDRLIIPDINEKLGYVMDALRMTKKELDGRVPLIGFSGAAWTLFTYAVEGGGSKNYAFAKKMMYREPKMAHMLLSKISRVITEYLLMQIEAGADAVQIFDSWASALSEDDYREFALPYIKESVQAVKTKYPDTPVIVFSKDCNTILSDIADTGCDAMGLGWNMDISKARAELKDRVTIQGNMDPTVLYGTHDKIRAEAGKILERFGQHSECSGHVFNLGHGILPDVDPENLKCLVDFVKEESTKYH</sequence>
<keyword id="KW-0963">Cytoplasm</keyword>
<keyword id="KW-0210">Decarboxylase</keyword>
<keyword id="KW-0456">Lyase</keyword>
<keyword id="KW-0627">Porphyrin biosynthesis</keyword>
<feature type="chain" id="PRO_1000099981" description="Uroporphyrinogen decarboxylase">
    <location>
        <begin position="1"/>
        <end position="351"/>
    </location>
</feature>
<feature type="binding site" evidence="1">
    <location>
        <begin position="25"/>
        <end position="29"/>
    </location>
    <ligand>
        <name>substrate</name>
    </ligand>
</feature>
<feature type="binding site" evidence="1">
    <location>
        <position position="74"/>
    </location>
    <ligand>
        <name>substrate</name>
    </ligand>
</feature>
<feature type="binding site" evidence="1">
    <location>
        <position position="151"/>
    </location>
    <ligand>
        <name>substrate</name>
    </ligand>
</feature>
<feature type="binding site" evidence="1">
    <location>
        <position position="206"/>
    </location>
    <ligand>
        <name>substrate</name>
    </ligand>
</feature>
<feature type="binding site" evidence="1">
    <location>
        <position position="325"/>
    </location>
    <ligand>
        <name>substrate</name>
    </ligand>
</feature>
<feature type="site" description="Transition state stabilizer" evidence="1">
    <location>
        <position position="74"/>
    </location>
</feature>
<gene>
    <name evidence="1" type="primary">hemE</name>
    <name type="ordered locus">Cphamn1_0287</name>
</gene>
<accession>B3EL29</accession>
<evidence type="ECO:0000255" key="1">
    <source>
        <dbReference type="HAMAP-Rule" id="MF_00218"/>
    </source>
</evidence>
<name>DCUP_CHLPB</name>
<proteinExistence type="inferred from homology"/>
<reference key="1">
    <citation type="submission" date="2008-06" db="EMBL/GenBank/DDBJ databases">
        <title>Complete sequence of Chlorobium phaeobacteroides BS1.</title>
        <authorList>
            <consortium name="US DOE Joint Genome Institute"/>
            <person name="Lucas S."/>
            <person name="Copeland A."/>
            <person name="Lapidus A."/>
            <person name="Glavina del Rio T."/>
            <person name="Dalin E."/>
            <person name="Tice H."/>
            <person name="Bruce D."/>
            <person name="Goodwin L."/>
            <person name="Pitluck S."/>
            <person name="Schmutz J."/>
            <person name="Larimer F."/>
            <person name="Land M."/>
            <person name="Hauser L."/>
            <person name="Kyrpides N."/>
            <person name="Ovchinnikova G."/>
            <person name="Li T."/>
            <person name="Liu Z."/>
            <person name="Zhao F."/>
            <person name="Overmann J."/>
            <person name="Bryant D.A."/>
            <person name="Richardson P."/>
        </authorList>
    </citation>
    <scope>NUCLEOTIDE SEQUENCE [LARGE SCALE GENOMIC DNA]</scope>
    <source>
        <strain>BS1</strain>
    </source>
</reference>
<organism>
    <name type="scientific">Chlorobium phaeobacteroides (strain BS1)</name>
    <dbReference type="NCBI Taxonomy" id="331678"/>
    <lineage>
        <taxon>Bacteria</taxon>
        <taxon>Pseudomonadati</taxon>
        <taxon>Chlorobiota</taxon>
        <taxon>Chlorobiia</taxon>
        <taxon>Chlorobiales</taxon>
        <taxon>Chlorobiaceae</taxon>
        <taxon>Chlorobium/Pelodictyon group</taxon>
        <taxon>Chlorobium</taxon>
    </lineage>
</organism>
<comment type="function">
    <text evidence="1">Catalyzes the decarboxylation of four acetate groups of uroporphyrinogen-III to yield coproporphyrinogen-III.</text>
</comment>
<comment type="catalytic activity">
    <reaction evidence="1">
        <text>uroporphyrinogen III + 4 H(+) = coproporphyrinogen III + 4 CO2</text>
        <dbReference type="Rhea" id="RHEA:19865"/>
        <dbReference type="ChEBI" id="CHEBI:15378"/>
        <dbReference type="ChEBI" id="CHEBI:16526"/>
        <dbReference type="ChEBI" id="CHEBI:57308"/>
        <dbReference type="ChEBI" id="CHEBI:57309"/>
        <dbReference type="EC" id="4.1.1.37"/>
    </reaction>
</comment>
<comment type="pathway">
    <text evidence="1">Porphyrin-containing compound metabolism; protoporphyrin-IX biosynthesis; coproporphyrinogen-III from 5-aminolevulinate: step 4/4.</text>
</comment>
<comment type="subunit">
    <text evidence="1">Homodimer.</text>
</comment>
<comment type="subcellular location">
    <subcellularLocation>
        <location evidence="1">Cytoplasm</location>
    </subcellularLocation>
</comment>
<comment type="similarity">
    <text evidence="1">Belongs to the uroporphyrinogen decarboxylase family.</text>
</comment>
<protein>
    <recommendedName>
        <fullName evidence="1">Uroporphyrinogen decarboxylase</fullName>
        <shortName evidence="1">UPD</shortName>
        <shortName evidence="1">URO-D</shortName>
        <ecNumber evidence="1">4.1.1.37</ecNumber>
    </recommendedName>
</protein>
<dbReference type="EC" id="4.1.1.37" evidence="1"/>
<dbReference type="EMBL" id="CP001101">
    <property type="protein sequence ID" value="ACE03256.1"/>
    <property type="molecule type" value="Genomic_DNA"/>
</dbReference>
<dbReference type="SMR" id="B3EL29"/>
<dbReference type="STRING" id="331678.Cphamn1_0287"/>
<dbReference type="KEGG" id="cpb:Cphamn1_0287"/>
<dbReference type="eggNOG" id="COG0407">
    <property type="taxonomic scope" value="Bacteria"/>
</dbReference>
<dbReference type="HOGENOM" id="CLU_040933_0_0_10"/>
<dbReference type="OrthoDB" id="9806656at2"/>
<dbReference type="UniPathway" id="UPA00251">
    <property type="reaction ID" value="UER00321"/>
</dbReference>
<dbReference type="GO" id="GO:0005829">
    <property type="term" value="C:cytosol"/>
    <property type="evidence" value="ECO:0007669"/>
    <property type="project" value="TreeGrafter"/>
</dbReference>
<dbReference type="GO" id="GO:0004853">
    <property type="term" value="F:uroporphyrinogen decarboxylase activity"/>
    <property type="evidence" value="ECO:0007669"/>
    <property type="project" value="UniProtKB-UniRule"/>
</dbReference>
<dbReference type="GO" id="GO:0006782">
    <property type="term" value="P:protoporphyrinogen IX biosynthetic process"/>
    <property type="evidence" value="ECO:0007669"/>
    <property type="project" value="UniProtKB-UniRule"/>
</dbReference>
<dbReference type="CDD" id="cd00717">
    <property type="entry name" value="URO-D"/>
    <property type="match status" value="1"/>
</dbReference>
<dbReference type="FunFam" id="3.20.20.210:FF:000001">
    <property type="entry name" value="Uroporphyrinogen decarboxylase"/>
    <property type="match status" value="1"/>
</dbReference>
<dbReference type="Gene3D" id="3.20.20.210">
    <property type="match status" value="1"/>
</dbReference>
<dbReference type="HAMAP" id="MF_00218">
    <property type="entry name" value="URO_D"/>
    <property type="match status" value="1"/>
</dbReference>
<dbReference type="InterPro" id="IPR038071">
    <property type="entry name" value="UROD/MetE-like_sf"/>
</dbReference>
<dbReference type="InterPro" id="IPR006361">
    <property type="entry name" value="Uroporphyrinogen_deCO2ase_HemE"/>
</dbReference>
<dbReference type="InterPro" id="IPR000257">
    <property type="entry name" value="Uroporphyrinogen_deCOase"/>
</dbReference>
<dbReference type="NCBIfam" id="TIGR01464">
    <property type="entry name" value="hemE"/>
    <property type="match status" value="1"/>
</dbReference>
<dbReference type="PANTHER" id="PTHR21091">
    <property type="entry name" value="METHYLTETRAHYDROFOLATE:HOMOCYSTEINE METHYLTRANSFERASE RELATED"/>
    <property type="match status" value="1"/>
</dbReference>
<dbReference type="PANTHER" id="PTHR21091:SF169">
    <property type="entry name" value="UROPORPHYRINOGEN DECARBOXYLASE"/>
    <property type="match status" value="1"/>
</dbReference>
<dbReference type="Pfam" id="PF01208">
    <property type="entry name" value="URO-D"/>
    <property type="match status" value="1"/>
</dbReference>
<dbReference type="SUPFAM" id="SSF51726">
    <property type="entry name" value="UROD/MetE-like"/>
    <property type="match status" value="1"/>
</dbReference>
<dbReference type="PROSITE" id="PS00906">
    <property type="entry name" value="UROD_1"/>
    <property type="match status" value="1"/>
</dbReference>
<dbReference type="PROSITE" id="PS00907">
    <property type="entry name" value="UROD_2"/>
    <property type="match status" value="1"/>
</dbReference>